<evidence type="ECO:0000255" key="1">
    <source>
        <dbReference type="HAMAP-Rule" id="MF_01595"/>
    </source>
</evidence>
<accession>Q086G7</accession>
<organism>
    <name type="scientific">Shewanella frigidimarina (strain NCIMB 400)</name>
    <dbReference type="NCBI Taxonomy" id="318167"/>
    <lineage>
        <taxon>Bacteria</taxon>
        <taxon>Pseudomonadati</taxon>
        <taxon>Pseudomonadota</taxon>
        <taxon>Gammaproteobacteria</taxon>
        <taxon>Alteromonadales</taxon>
        <taxon>Shewanellaceae</taxon>
        <taxon>Shewanella</taxon>
    </lineage>
</organism>
<comment type="function">
    <text evidence="1">Involved in mRNA degradation. Catalyzes the phosphorolysis of single-stranded polyribonucleotides processively in the 3'- to 5'-direction.</text>
</comment>
<comment type="catalytic activity">
    <reaction evidence="1">
        <text>RNA(n+1) + phosphate = RNA(n) + a ribonucleoside 5'-diphosphate</text>
        <dbReference type="Rhea" id="RHEA:22096"/>
        <dbReference type="Rhea" id="RHEA-COMP:14527"/>
        <dbReference type="Rhea" id="RHEA-COMP:17342"/>
        <dbReference type="ChEBI" id="CHEBI:43474"/>
        <dbReference type="ChEBI" id="CHEBI:57930"/>
        <dbReference type="ChEBI" id="CHEBI:140395"/>
        <dbReference type="EC" id="2.7.7.8"/>
    </reaction>
</comment>
<comment type="cofactor">
    <cofactor evidence="1">
        <name>Mg(2+)</name>
        <dbReference type="ChEBI" id="CHEBI:18420"/>
    </cofactor>
</comment>
<comment type="subunit">
    <text evidence="1">Component of the RNA degradosome, which is a multiprotein complex involved in RNA processing and mRNA degradation.</text>
</comment>
<comment type="subcellular location">
    <subcellularLocation>
        <location evidence="1">Cytoplasm</location>
    </subcellularLocation>
</comment>
<comment type="similarity">
    <text evidence="1">Belongs to the polyribonucleotide nucleotidyltransferase family.</text>
</comment>
<gene>
    <name evidence="1" type="primary">pnp</name>
    <name type="ordered locus">Sfri_0995</name>
</gene>
<keyword id="KW-0963">Cytoplasm</keyword>
<keyword id="KW-0460">Magnesium</keyword>
<keyword id="KW-0479">Metal-binding</keyword>
<keyword id="KW-0548">Nucleotidyltransferase</keyword>
<keyword id="KW-1185">Reference proteome</keyword>
<keyword id="KW-0694">RNA-binding</keyword>
<keyword id="KW-0808">Transferase</keyword>
<proteinExistence type="inferred from homology"/>
<protein>
    <recommendedName>
        <fullName evidence="1">Polyribonucleotide nucleotidyltransferase</fullName>
        <ecNumber evidence="1">2.7.7.8</ecNumber>
    </recommendedName>
    <alternativeName>
        <fullName evidence="1">Polynucleotide phosphorylase</fullName>
        <shortName evidence="1">PNPase</shortName>
    </alternativeName>
</protein>
<feature type="chain" id="PRO_0000329840" description="Polyribonucleotide nucleotidyltransferase">
    <location>
        <begin position="1"/>
        <end position="698"/>
    </location>
</feature>
<feature type="domain" description="KH" evidence="1">
    <location>
        <begin position="552"/>
        <end position="611"/>
    </location>
</feature>
<feature type="domain" description="S1 motif" evidence="1">
    <location>
        <begin position="621"/>
        <end position="689"/>
    </location>
</feature>
<feature type="binding site" evidence="1">
    <location>
        <position position="485"/>
    </location>
    <ligand>
        <name>Mg(2+)</name>
        <dbReference type="ChEBI" id="CHEBI:18420"/>
    </ligand>
</feature>
<feature type="binding site" evidence="1">
    <location>
        <position position="491"/>
    </location>
    <ligand>
        <name>Mg(2+)</name>
        <dbReference type="ChEBI" id="CHEBI:18420"/>
    </ligand>
</feature>
<sequence length="698" mass="75212">MNPIVKSFEYGQHTVTLETGVIARQADAAVLASMGDTTVLVTVVGKKVADLSRDFFPLTVNYQEKTYAAGKIPGGFFKREGRPSEDETLIARLIDRPIRPLFPNGFKNEVQVIITVVSVDPQIEPDIVSMIGTSAALAISGIPFSGPLGAARVGYINDEYVLNPTVDQLATSSLNLVVAGTKAAVLMVESEAKALAEEIMLGAVTYGHDQQQVVVDAIAEFKAEAGKPTWDWTAPVQDQALVAKIKELAEAGMTEAYQIEVKQDRYVQVGIVKAAAKAALVAENPDVDTREVDNLLGSLEKSVVRGRIISGKPRIDGREPDMIRALSVLAGVLPRTHGSSLFTRGETQALVTCTLGTERDAQKIDSIMGERTNRFMLHYNFPPYSVGETGMVGSPKRREIGHGKLAWRGMNAVMPSAEEFPYSIRVVSEITESNGSSSMASVCGTSLALMDAGVPIKTSVAGIAMGLVKEGDDFVVLSDILGDEDHLGDMDFKVAGTRDGITALQMDIKIEGITKEIMDIALQQAYGARVHILNVMDQAIGTHRGDISAHAPRITTIKINPEKIRDVIGKGGAVIRALTEETGTTIELDDNGTVKIASSNGEATKEAIRRIEEITAEVEVGRIYNGKVIRIVDFGAFVNILPGKDGLVHISQISDERVANVSDHLEMNQEVAVKVMEVDRQGRVRLSIKEAQAKETAE</sequence>
<dbReference type="EC" id="2.7.7.8" evidence="1"/>
<dbReference type="EMBL" id="CP000447">
    <property type="protein sequence ID" value="ABI70848.1"/>
    <property type="molecule type" value="Genomic_DNA"/>
</dbReference>
<dbReference type="RefSeq" id="WP_011636469.1">
    <property type="nucleotide sequence ID" value="NC_008345.1"/>
</dbReference>
<dbReference type="SMR" id="Q086G7"/>
<dbReference type="STRING" id="318167.Sfri_0995"/>
<dbReference type="KEGG" id="sfr:Sfri_0995"/>
<dbReference type="eggNOG" id="COG1185">
    <property type="taxonomic scope" value="Bacteria"/>
</dbReference>
<dbReference type="HOGENOM" id="CLU_004217_2_2_6"/>
<dbReference type="OrthoDB" id="9804305at2"/>
<dbReference type="Proteomes" id="UP000000684">
    <property type="component" value="Chromosome"/>
</dbReference>
<dbReference type="GO" id="GO:0005829">
    <property type="term" value="C:cytosol"/>
    <property type="evidence" value="ECO:0007669"/>
    <property type="project" value="TreeGrafter"/>
</dbReference>
<dbReference type="GO" id="GO:0000175">
    <property type="term" value="F:3'-5'-RNA exonuclease activity"/>
    <property type="evidence" value="ECO:0007669"/>
    <property type="project" value="TreeGrafter"/>
</dbReference>
<dbReference type="GO" id="GO:0000287">
    <property type="term" value="F:magnesium ion binding"/>
    <property type="evidence" value="ECO:0007669"/>
    <property type="project" value="UniProtKB-UniRule"/>
</dbReference>
<dbReference type="GO" id="GO:0004654">
    <property type="term" value="F:polyribonucleotide nucleotidyltransferase activity"/>
    <property type="evidence" value="ECO:0007669"/>
    <property type="project" value="UniProtKB-UniRule"/>
</dbReference>
<dbReference type="GO" id="GO:0003723">
    <property type="term" value="F:RNA binding"/>
    <property type="evidence" value="ECO:0007669"/>
    <property type="project" value="UniProtKB-UniRule"/>
</dbReference>
<dbReference type="GO" id="GO:0006402">
    <property type="term" value="P:mRNA catabolic process"/>
    <property type="evidence" value="ECO:0007669"/>
    <property type="project" value="UniProtKB-UniRule"/>
</dbReference>
<dbReference type="GO" id="GO:0006396">
    <property type="term" value="P:RNA processing"/>
    <property type="evidence" value="ECO:0007669"/>
    <property type="project" value="InterPro"/>
</dbReference>
<dbReference type="CDD" id="cd02393">
    <property type="entry name" value="KH-I_PNPase"/>
    <property type="match status" value="1"/>
</dbReference>
<dbReference type="CDD" id="cd11363">
    <property type="entry name" value="RNase_PH_PNPase_1"/>
    <property type="match status" value="1"/>
</dbReference>
<dbReference type="CDD" id="cd11364">
    <property type="entry name" value="RNase_PH_PNPase_2"/>
    <property type="match status" value="1"/>
</dbReference>
<dbReference type="CDD" id="cd04472">
    <property type="entry name" value="S1_PNPase"/>
    <property type="match status" value="1"/>
</dbReference>
<dbReference type="FunFam" id="2.40.50.140:FF:000023">
    <property type="entry name" value="Polyribonucleotide nucleotidyltransferase"/>
    <property type="match status" value="1"/>
</dbReference>
<dbReference type="FunFam" id="3.30.1370.10:FF:000001">
    <property type="entry name" value="Polyribonucleotide nucleotidyltransferase"/>
    <property type="match status" value="1"/>
</dbReference>
<dbReference type="FunFam" id="3.30.230.70:FF:000001">
    <property type="entry name" value="Polyribonucleotide nucleotidyltransferase"/>
    <property type="match status" value="1"/>
</dbReference>
<dbReference type="FunFam" id="3.30.230.70:FF:000002">
    <property type="entry name" value="Polyribonucleotide nucleotidyltransferase"/>
    <property type="match status" value="1"/>
</dbReference>
<dbReference type="Gene3D" id="3.30.230.70">
    <property type="entry name" value="GHMP Kinase, N-terminal domain"/>
    <property type="match status" value="2"/>
</dbReference>
<dbReference type="Gene3D" id="3.30.1370.10">
    <property type="entry name" value="K Homology domain, type 1"/>
    <property type="match status" value="1"/>
</dbReference>
<dbReference type="Gene3D" id="2.40.50.140">
    <property type="entry name" value="Nucleic acid-binding proteins"/>
    <property type="match status" value="1"/>
</dbReference>
<dbReference type="HAMAP" id="MF_01595">
    <property type="entry name" value="PNPase"/>
    <property type="match status" value="1"/>
</dbReference>
<dbReference type="InterPro" id="IPR001247">
    <property type="entry name" value="ExoRNase_PH_dom1"/>
</dbReference>
<dbReference type="InterPro" id="IPR015847">
    <property type="entry name" value="ExoRNase_PH_dom2"/>
</dbReference>
<dbReference type="InterPro" id="IPR036345">
    <property type="entry name" value="ExoRNase_PH_dom2_sf"/>
</dbReference>
<dbReference type="InterPro" id="IPR004087">
    <property type="entry name" value="KH_dom"/>
</dbReference>
<dbReference type="InterPro" id="IPR004088">
    <property type="entry name" value="KH_dom_type_1"/>
</dbReference>
<dbReference type="InterPro" id="IPR036612">
    <property type="entry name" value="KH_dom_type_1_sf"/>
</dbReference>
<dbReference type="InterPro" id="IPR012340">
    <property type="entry name" value="NA-bd_OB-fold"/>
</dbReference>
<dbReference type="InterPro" id="IPR012162">
    <property type="entry name" value="PNPase"/>
</dbReference>
<dbReference type="InterPro" id="IPR027408">
    <property type="entry name" value="PNPase/RNase_PH_dom_sf"/>
</dbReference>
<dbReference type="InterPro" id="IPR015848">
    <property type="entry name" value="PNPase_PH_RNA-bd_bac/org-type"/>
</dbReference>
<dbReference type="InterPro" id="IPR036456">
    <property type="entry name" value="PNPase_PH_RNA-bd_sf"/>
</dbReference>
<dbReference type="InterPro" id="IPR020568">
    <property type="entry name" value="Ribosomal_Su5_D2-typ_SF"/>
</dbReference>
<dbReference type="InterPro" id="IPR003029">
    <property type="entry name" value="S1_domain"/>
</dbReference>
<dbReference type="NCBIfam" id="TIGR03591">
    <property type="entry name" value="polynuc_phos"/>
    <property type="match status" value="1"/>
</dbReference>
<dbReference type="NCBIfam" id="NF008805">
    <property type="entry name" value="PRK11824.1"/>
    <property type="match status" value="1"/>
</dbReference>
<dbReference type="PANTHER" id="PTHR11252">
    <property type="entry name" value="POLYRIBONUCLEOTIDE NUCLEOTIDYLTRANSFERASE"/>
    <property type="match status" value="1"/>
</dbReference>
<dbReference type="PANTHER" id="PTHR11252:SF0">
    <property type="entry name" value="POLYRIBONUCLEOTIDE NUCLEOTIDYLTRANSFERASE 1, MITOCHONDRIAL"/>
    <property type="match status" value="1"/>
</dbReference>
<dbReference type="Pfam" id="PF00013">
    <property type="entry name" value="KH_1"/>
    <property type="match status" value="1"/>
</dbReference>
<dbReference type="Pfam" id="PF03726">
    <property type="entry name" value="PNPase"/>
    <property type="match status" value="1"/>
</dbReference>
<dbReference type="Pfam" id="PF01138">
    <property type="entry name" value="RNase_PH"/>
    <property type="match status" value="2"/>
</dbReference>
<dbReference type="Pfam" id="PF03725">
    <property type="entry name" value="RNase_PH_C"/>
    <property type="match status" value="2"/>
</dbReference>
<dbReference type="Pfam" id="PF00575">
    <property type="entry name" value="S1"/>
    <property type="match status" value="1"/>
</dbReference>
<dbReference type="PIRSF" id="PIRSF005499">
    <property type="entry name" value="PNPase"/>
    <property type="match status" value="1"/>
</dbReference>
<dbReference type="SMART" id="SM00322">
    <property type="entry name" value="KH"/>
    <property type="match status" value="1"/>
</dbReference>
<dbReference type="SMART" id="SM00316">
    <property type="entry name" value="S1"/>
    <property type="match status" value="1"/>
</dbReference>
<dbReference type="SUPFAM" id="SSF54791">
    <property type="entry name" value="Eukaryotic type KH-domain (KH-domain type I)"/>
    <property type="match status" value="1"/>
</dbReference>
<dbReference type="SUPFAM" id="SSF50249">
    <property type="entry name" value="Nucleic acid-binding proteins"/>
    <property type="match status" value="1"/>
</dbReference>
<dbReference type="SUPFAM" id="SSF46915">
    <property type="entry name" value="Polynucleotide phosphorylase/guanosine pentaphosphate synthase (PNPase/GPSI), domain 3"/>
    <property type="match status" value="1"/>
</dbReference>
<dbReference type="SUPFAM" id="SSF55666">
    <property type="entry name" value="Ribonuclease PH domain 2-like"/>
    <property type="match status" value="2"/>
</dbReference>
<dbReference type="SUPFAM" id="SSF54211">
    <property type="entry name" value="Ribosomal protein S5 domain 2-like"/>
    <property type="match status" value="2"/>
</dbReference>
<dbReference type="PROSITE" id="PS50084">
    <property type="entry name" value="KH_TYPE_1"/>
    <property type="match status" value="1"/>
</dbReference>
<dbReference type="PROSITE" id="PS50126">
    <property type="entry name" value="S1"/>
    <property type="match status" value="1"/>
</dbReference>
<reference key="1">
    <citation type="submission" date="2006-08" db="EMBL/GenBank/DDBJ databases">
        <title>Complete sequence of Shewanella frigidimarina NCIMB 400.</title>
        <authorList>
            <consortium name="US DOE Joint Genome Institute"/>
            <person name="Copeland A."/>
            <person name="Lucas S."/>
            <person name="Lapidus A."/>
            <person name="Barry K."/>
            <person name="Detter J.C."/>
            <person name="Glavina del Rio T."/>
            <person name="Hammon N."/>
            <person name="Israni S."/>
            <person name="Dalin E."/>
            <person name="Tice H."/>
            <person name="Pitluck S."/>
            <person name="Fredrickson J.K."/>
            <person name="Kolker E."/>
            <person name="McCuel L.A."/>
            <person name="DiChristina T."/>
            <person name="Nealson K.H."/>
            <person name="Newman D."/>
            <person name="Tiedje J.M."/>
            <person name="Zhou J."/>
            <person name="Romine M.F."/>
            <person name="Culley D.E."/>
            <person name="Serres M."/>
            <person name="Chertkov O."/>
            <person name="Brettin T."/>
            <person name="Bruce D."/>
            <person name="Han C."/>
            <person name="Tapia R."/>
            <person name="Gilna P."/>
            <person name="Schmutz J."/>
            <person name="Larimer F."/>
            <person name="Land M."/>
            <person name="Hauser L."/>
            <person name="Kyrpides N."/>
            <person name="Mikhailova N."/>
            <person name="Richardson P."/>
        </authorList>
    </citation>
    <scope>NUCLEOTIDE SEQUENCE [LARGE SCALE GENOMIC DNA]</scope>
    <source>
        <strain>NCIMB 400</strain>
    </source>
</reference>
<name>PNP_SHEFN</name>